<name>PDXJ_CAMJJ</name>
<keyword id="KW-0963">Cytoplasm</keyword>
<keyword id="KW-0664">Pyridoxine biosynthesis</keyword>
<keyword id="KW-0808">Transferase</keyword>
<organism>
    <name type="scientific">Campylobacter jejuni subsp. jejuni serotype O:23/36 (strain 81-176)</name>
    <dbReference type="NCBI Taxonomy" id="354242"/>
    <lineage>
        <taxon>Bacteria</taxon>
        <taxon>Pseudomonadati</taxon>
        <taxon>Campylobacterota</taxon>
        <taxon>Epsilonproteobacteria</taxon>
        <taxon>Campylobacterales</taxon>
        <taxon>Campylobacteraceae</taxon>
        <taxon>Campylobacter</taxon>
    </lineage>
</organism>
<sequence length="262" mass="29500">MLLGVNIDHIAVLRQARMVNDPDLLEAAFIAAKHGDQITLHVREDRRHAQDFDLENIIKFCKSPINLECALNDEILNLALKLKPHRVTLVPEKREELTTEGGLCLNHAKLKQSIEKLQNANIEVSLFINPSLEDIEKSKILKAQFIELHTGHYANLHNALFSNISHTAFALKELGQDKKTLQTQFEKELQNLELCAKKGTELGLKVAAGHGLNYKNVKLIVKIKEICELNIGQSIVARSVFTGLKNAILEMKELIKDEKTSH</sequence>
<accession>A1W0M1</accession>
<gene>
    <name evidence="1" type="primary">pdxJ</name>
    <name type="ordered locus">CJJ81176_1252</name>
</gene>
<reference key="1">
    <citation type="submission" date="2006-12" db="EMBL/GenBank/DDBJ databases">
        <authorList>
            <person name="Fouts D.E."/>
            <person name="Nelson K.E."/>
            <person name="Sebastian Y."/>
        </authorList>
    </citation>
    <scope>NUCLEOTIDE SEQUENCE [LARGE SCALE GENOMIC DNA]</scope>
    <source>
        <strain>81-176</strain>
    </source>
</reference>
<protein>
    <recommendedName>
        <fullName evidence="1">Pyridoxine 5'-phosphate synthase</fullName>
        <shortName evidence="1">PNP synthase</shortName>
        <ecNumber evidence="1">2.6.99.2</ecNumber>
    </recommendedName>
</protein>
<evidence type="ECO:0000255" key="1">
    <source>
        <dbReference type="HAMAP-Rule" id="MF_00279"/>
    </source>
</evidence>
<feature type="chain" id="PRO_1000022368" description="Pyridoxine 5'-phosphate synthase">
    <location>
        <begin position="1"/>
        <end position="262"/>
    </location>
</feature>
<feature type="active site" description="Proton acceptor" evidence="1">
    <location>
        <position position="41"/>
    </location>
</feature>
<feature type="active site" description="Proton acceptor" evidence="1">
    <location>
        <position position="68"/>
    </location>
</feature>
<feature type="active site" description="Proton donor" evidence="1">
    <location>
        <position position="210"/>
    </location>
</feature>
<feature type="binding site" evidence="1">
    <location>
        <position position="6"/>
    </location>
    <ligand>
        <name>3-amino-2-oxopropyl phosphate</name>
        <dbReference type="ChEBI" id="CHEBI:57279"/>
    </ligand>
</feature>
<feature type="binding site" evidence="1">
    <location>
        <begin position="8"/>
        <end position="9"/>
    </location>
    <ligand>
        <name>1-deoxy-D-xylulose 5-phosphate</name>
        <dbReference type="ChEBI" id="CHEBI:57792"/>
    </ligand>
</feature>
<feature type="binding site" evidence="1">
    <location>
        <position position="17"/>
    </location>
    <ligand>
        <name>3-amino-2-oxopropyl phosphate</name>
        <dbReference type="ChEBI" id="CHEBI:57279"/>
    </ligand>
</feature>
<feature type="binding site" evidence="1">
    <location>
        <position position="43"/>
    </location>
    <ligand>
        <name>1-deoxy-D-xylulose 5-phosphate</name>
        <dbReference type="ChEBI" id="CHEBI:57792"/>
    </ligand>
</feature>
<feature type="binding site" evidence="1">
    <location>
        <position position="48"/>
    </location>
    <ligand>
        <name>1-deoxy-D-xylulose 5-phosphate</name>
        <dbReference type="ChEBI" id="CHEBI:57792"/>
    </ligand>
</feature>
<feature type="binding site" evidence="1">
    <location>
        <position position="98"/>
    </location>
    <ligand>
        <name>1-deoxy-D-xylulose 5-phosphate</name>
        <dbReference type="ChEBI" id="CHEBI:57792"/>
    </ligand>
</feature>
<feature type="binding site" evidence="1">
    <location>
        <position position="211"/>
    </location>
    <ligand>
        <name>3-amino-2-oxopropyl phosphate</name>
        <dbReference type="ChEBI" id="CHEBI:57279"/>
    </ligand>
</feature>
<feature type="binding site" evidence="1">
    <location>
        <begin position="232"/>
        <end position="233"/>
    </location>
    <ligand>
        <name>3-amino-2-oxopropyl phosphate</name>
        <dbReference type="ChEBI" id="CHEBI:57279"/>
    </ligand>
</feature>
<feature type="site" description="Transition state stabilizer" evidence="1">
    <location>
        <position position="147"/>
    </location>
</feature>
<proteinExistence type="inferred from homology"/>
<dbReference type="EC" id="2.6.99.2" evidence="1"/>
<dbReference type="EMBL" id="CP000538">
    <property type="protein sequence ID" value="EAQ72683.1"/>
    <property type="molecule type" value="Genomic_DNA"/>
</dbReference>
<dbReference type="RefSeq" id="WP_002856096.1">
    <property type="nucleotide sequence ID" value="NC_008787.1"/>
</dbReference>
<dbReference type="SMR" id="A1W0M1"/>
<dbReference type="KEGG" id="cjj:CJJ81176_1252"/>
<dbReference type="eggNOG" id="COG0854">
    <property type="taxonomic scope" value="Bacteria"/>
</dbReference>
<dbReference type="HOGENOM" id="CLU_074563_0_0_7"/>
<dbReference type="UniPathway" id="UPA00244">
    <property type="reaction ID" value="UER00313"/>
</dbReference>
<dbReference type="Proteomes" id="UP000000646">
    <property type="component" value="Chromosome"/>
</dbReference>
<dbReference type="GO" id="GO:0005829">
    <property type="term" value="C:cytosol"/>
    <property type="evidence" value="ECO:0007669"/>
    <property type="project" value="TreeGrafter"/>
</dbReference>
<dbReference type="GO" id="GO:0033856">
    <property type="term" value="F:pyridoxine 5'-phosphate synthase activity"/>
    <property type="evidence" value="ECO:0007669"/>
    <property type="project" value="UniProtKB-EC"/>
</dbReference>
<dbReference type="GO" id="GO:0008615">
    <property type="term" value="P:pyridoxine biosynthetic process"/>
    <property type="evidence" value="ECO:0007669"/>
    <property type="project" value="UniProtKB-UniRule"/>
</dbReference>
<dbReference type="CDD" id="cd00003">
    <property type="entry name" value="PNPsynthase"/>
    <property type="match status" value="1"/>
</dbReference>
<dbReference type="Gene3D" id="3.20.20.70">
    <property type="entry name" value="Aldolase class I"/>
    <property type="match status" value="1"/>
</dbReference>
<dbReference type="HAMAP" id="MF_00279">
    <property type="entry name" value="PdxJ"/>
    <property type="match status" value="1"/>
</dbReference>
<dbReference type="InterPro" id="IPR013785">
    <property type="entry name" value="Aldolase_TIM"/>
</dbReference>
<dbReference type="InterPro" id="IPR004569">
    <property type="entry name" value="PyrdxlP_synth_PdxJ"/>
</dbReference>
<dbReference type="InterPro" id="IPR036130">
    <property type="entry name" value="Pyridoxine-5'_phos_synth"/>
</dbReference>
<dbReference type="NCBIfam" id="TIGR00559">
    <property type="entry name" value="pdxJ"/>
    <property type="match status" value="1"/>
</dbReference>
<dbReference type="NCBIfam" id="NF003625">
    <property type="entry name" value="PRK05265.1-3"/>
    <property type="match status" value="1"/>
</dbReference>
<dbReference type="NCBIfam" id="NF003627">
    <property type="entry name" value="PRK05265.1-5"/>
    <property type="match status" value="1"/>
</dbReference>
<dbReference type="PANTHER" id="PTHR30456">
    <property type="entry name" value="PYRIDOXINE 5'-PHOSPHATE SYNTHASE"/>
    <property type="match status" value="1"/>
</dbReference>
<dbReference type="PANTHER" id="PTHR30456:SF0">
    <property type="entry name" value="PYRIDOXINE 5'-PHOSPHATE SYNTHASE"/>
    <property type="match status" value="1"/>
</dbReference>
<dbReference type="Pfam" id="PF03740">
    <property type="entry name" value="PdxJ"/>
    <property type="match status" value="1"/>
</dbReference>
<dbReference type="SUPFAM" id="SSF63892">
    <property type="entry name" value="Pyridoxine 5'-phosphate synthase"/>
    <property type="match status" value="1"/>
</dbReference>
<comment type="function">
    <text evidence="1">Catalyzes the complicated ring closure reaction between the two acyclic compounds 1-deoxy-D-xylulose-5-phosphate (DXP) and 3-amino-2-oxopropyl phosphate (1-amino-acetone-3-phosphate or AAP) to form pyridoxine 5'-phosphate (PNP) and inorganic phosphate.</text>
</comment>
<comment type="catalytic activity">
    <reaction evidence="1">
        <text>3-amino-2-oxopropyl phosphate + 1-deoxy-D-xylulose 5-phosphate = pyridoxine 5'-phosphate + phosphate + 2 H2O + H(+)</text>
        <dbReference type="Rhea" id="RHEA:15265"/>
        <dbReference type="ChEBI" id="CHEBI:15377"/>
        <dbReference type="ChEBI" id="CHEBI:15378"/>
        <dbReference type="ChEBI" id="CHEBI:43474"/>
        <dbReference type="ChEBI" id="CHEBI:57279"/>
        <dbReference type="ChEBI" id="CHEBI:57792"/>
        <dbReference type="ChEBI" id="CHEBI:58589"/>
        <dbReference type="EC" id="2.6.99.2"/>
    </reaction>
</comment>
<comment type="pathway">
    <text evidence="1">Cofactor biosynthesis; pyridoxine 5'-phosphate biosynthesis; pyridoxine 5'-phosphate from D-erythrose 4-phosphate: step 5/5.</text>
</comment>
<comment type="subunit">
    <text evidence="1">Homooctamer; tetramer of dimers.</text>
</comment>
<comment type="subcellular location">
    <subcellularLocation>
        <location evidence="1">Cytoplasm</location>
    </subcellularLocation>
</comment>
<comment type="similarity">
    <text evidence="1">Belongs to the PNP synthase family.</text>
</comment>